<keyword id="KW-0150">Chloroplast</keyword>
<keyword id="KW-0934">Plastid</keyword>
<keyword id="KW-1185">Reference proteome</keyword>
<keyword id="KW-0809">Transit peptide</keyword>
<dbReference type="EMBL" id="DP000009">
    <property type="protein sequence ID" value="ABF93832.1"/>
    <property type="molecule type" value="Genomic_DNA"/>
</dbReference>
<dbReference type="EMBL" id="AP008209">
    <property type="protein sequence ID" value="BAF10788.1"/>
    <property type="status" value="ALT_SEQ"/>
    <property type="molecule type" value="Genomic_DNA"/>
</dbReference>
<dbReference type="EMBL" id="AP014959">
    <property type="protein sequence ID" value="BAS82157.1"/>
    <property type="status" value="ALT_INIT"/>
    <property type="molecule type" value="Genomic_DNA"/>
</dbReference>
<dbReference type="EMBL" id="CM000146">
    <property type="protein sequence ID" value="EAZ45418.1"/>
    <property type="status" value="ALT_SEQ"/>
    <property type="molecule type" value="Genomic_DNA"/>
</dbReference>
<dbReference type="RefSeq" id="XP_015630172.1">
    <property type="nucleotide sequence ID" value="XM_015774686.1"/>
</dbReference>
<dbReference type="PaxDb" id="39947-A0A0P0VSN7"/>
<dbReference type="EnsemblPlants" id="Os03t0133300-02">
    <property type="protein sequence ID" value="Os03t0133300-02"/>
    <property type="gene ID" value="Os03g0133300"/>
</dbReference>
<dbReference type="Gramene" id="Os03t0133300-02">
    <property type="protein sequence ID" value="Os03t0133300-02"/>
    <property type="gene ID" value="Os03g0133300"/>
</dbReference>
<dbReference type="KEGG" id="dosa:Os03g0133300"/>
<dbReference type="eggNOG" id="ENOG502QU89">
    <property type="taxonomic scope" value="Eukaryota"/>
</dbReference>
<dbReference type="HOGENOM" id="CLU_040240_1_0_1"/>
<dbReference type="OrthoDB" id="343842at2759"/>
<dbReference type="Proteomes" id="UP000000763">
    <property type="component" value="Chromosome 3"/>
</dbReference>
<dbReference type="Proteomes" id="UP000007752">
    <property type="component" value="Chromosome 9"/>
</dbReference>
<dbReference type="Proteomes" id="UP000059680">
    <property type="component" value="Chromosome 3"/>
</dbReference>
<dbReference type="GO" id="GO:0009570">
    <property type="term" value="C:chloroplast stroma"/>
    <property type="evidence" value="ECO:0007669"/>
    <property type="project" value="UniProtKB-SubCell"/>
</dbReference>
<dbReference type="GO" id="GO:0043036">
    <property type="term" value="C:starch grain"/>
    <property type="evidence" value="ECO:0007669"/>
    <property type="project" value="EnsemblPlants"/>
</dbReference>
<dbReference type="GO" id="GO:2001070">
    <property type="term" value="F:starch binding"/>
    <property type="evidence" value="ECO:0007669"/>
    <property type="project" value="EnsemblPlants"/>
</dbReference>
<dbReference type="GO" id="GO:0009959">
    <property type="term" value="P:negative gravitropism"/>
    <property type="evidence" value="ECO:0000315"/>
    <property type="project" value="UniProtKB"/>
</dbReference>
<dbReference type="GO" id="GO:0009958">
    <property type="term" value="P:positive gravitropism"/>
    <property type="evidence" value="ECO:0000315"/>
    <property type="project" value="UniProtKB"/>
</dbReference>
<dbReference type="GO" id="GO:0032948">
    <property type="term" value="P:regulation of alpha-glucan metabolic process"/>
    <property type="evidence" value="ECO:0007669"/>
    <property type="project" value="EnsemblPlants"/>
</dbReference>
<dbReference type="GO" id="GO:2000904">
    <property type="term" value="P:regulation of starch metabolic process"/>
    <property type="evidence" value="ECO:0000315"/>
    <property type="project" value="UniProtKB"/>
</dbReference>
<dbReference type="GO" id="GO:0048316">
    <property type="term" value="P:seed development"/>
    <property type="evidence" value="ECO:0000315"/>
    <property type="project" value="UniProtKB"/>
</dbReference>
<dbReference type="GO" id="GO:0062052">
    <property type="term" value="P:starch granule initiation"/>
    <property type="evidence" value="ECO:0000315"/>
    <property type="project" value="UniProtKB"/>
</dbReference>
<dbReference type="GO" id="GO:0005982">
    <property type="term" value="P:starch metabolic process"/>
    <property type="evidence" value="ECO:0000318"/>
    <property type="project" value="GO_Central"/>
</dbReference>
<dbReference type="InterPro" id="IPR052495">
    <property type="entry name" value="Alpha-glucan_binding_chloro"/>
</dbReference>
<dbReference type="PANTHER" id="PTHR34113">
    <property type="entry name" value="INACTIVE PURPLE ACID PHOSPHATASE-LIKE PROTEIN"/>
    <property type="match status" value="1"/>
</dbReference>
<dbReference type="PANTHER" id="PTHR34113:SF3">
    <property type="entry name" value="PROTEIN EARLY STARVATION 1, CHLOROPLASTIC"/>
    <property type="match status" value="1"/>
</dbReference>
<evidence type="ECO:0000250" key="1">
    <source>
        <dbReference type="UniProtKB" id="F4I9G2"/>
    </source>
</evidence>
<evidence type="ECO:0000255" key="2"/>
<evidence type="ECO:0000256" key="3">
    <source>
        <dbReference type="SAM" id="MobiDB-lite"/>
    </source>
</evidence>
<evidence type="ECO:0000269" key="4">
    <source>
    </source>
</evidence>
<evidence type="ECO:0000303" key="5">
    <source>
    </source>
</evidence>
<evidence type="ECO:0000305" key="6"/>
<evidence type="ECO:0000312" key="7">
    <source>
        <dbReference type="EMBL" id="BAS82157.1"/>
    </source>
</evidence>
<evidence type="ECO:0000312" key="8">
    <source>
        <dbReference type="EMBL" id="EAZ45418.1"/>
    </source>
</evidence>
<accession>Q8H8C6</accession>
<accession>A0A0P0VSN7</accession>
<accession>A3C0S9</accession>
<accession>Q0DVF0</accession>
<feature type="transit peptide" description="Chloroplast" evidence="2">
    <location>
        <begin position="1"/>
        <end position="19"/>
    </location>
</feature>
<feature type="chain" id="PRO_0000457401" description="Protein EARLY STARVATION 1, chloroplastic">
    <location>
        <begin position="20"/>
        <end position="431"/>
    </location>
</feature>
<feature type="region of interest" description="Disordered" evidence="3">
    <location>
        <begin position="65"/>
        <end position="126"/>
    </location>
</feature>
<feature type="region of interest" description="Disordered" evidence="3">
    <location>
        <begin position="403"/>
        <end position="431"/>
    </location>
</feature>
<feature type="compositionally biased region" description="Pro residues" evidence="3">
    <location>
        <begin position="415"/>
        <end position="431"/>
    </location>
</feature>
<protein>
    <recommendedName>
        <fullName evidence="5">Protein EARLY STARVATION 1, chloroplastic</fullName>
        <shortName evidence="5">OsESV1</shortName>
    </recommendedName>
</protein>
<gene>
    <name evidence="5" type="primary">ESV1</name>
    <name evidence="6" type="ordered locus">LOC_Os03g04100</name>
    <name evidence="6" type="ordered locus">Os03g0133300</name>
    <name evidence="8" type="ORF">OsJ_30067</name>
    <name evidence="7" type="ORF">OSNPB_030133300</name>
</gene>
<comment type="function">
    <text evidence="1 4">Binds preferentially to highly ordered alpha-glucans, such as starch and crystalline maltodextrins (By similarity). Involved in the organization of the starch granule matrix, thus influencing starch turnover by modulating the accessibility of starch polymers to modifying and degrading enzymes (PubMed:34367195). Required for the control of starch degradation in leaves and starch distribution in nonphotosynthetic parts (PubMed:34367195). Promotes gravitropic responses, negative in shoots but positive in roots, by facilitating starch granules (statoliths) formation in hypocotyls and roots columella (PubMed:34367195). Facilitates tight packing of starch granules in grains (PubMed:34367195).</text>
</comment>
<comment type="subcellular location">
    <subcellularLocation>
        <location evidence="1">Plastid</location>
        <location evidence="1">Chloroplast stroma</location>
    </subcellularLocation>
    <text evidence="1">Binds to starch granules in chloroplasts.</text>
</comment>
<comment type="disruption phenotype">
    <text evidence="4">Reduced starch levels in leaves and loosely packed starch granules in grains (PubMed:34367195). Absence of starch granules in hypocotyl endodermis and root columella leading to impaired endodermal plastids sedimentation and reduced hypocotyl negative gravitropism in the dark and reduced root positive gravitropism (PubMed:34367195). Chalky rather than translucent grains due to abnormally small, loosely packed starch granules with conspicuous crevices between them (PubMed:34367195).</text>
</comment>
<comment type="similarity">
    <text evidence="6">Belongs to the ESV1 family.</text>
</comment>
<comment type="sequence caution" evidence="6">
    <conflict type="erroneous gene model prediction">
        <sequence resource="EMBL-CDS" id="BAF10788"/>
    </conflict>
</comment>
<comment type="sequence caution" evidence="6">
    <conflict type="erroneous initiation">
        <sequence resource="EMBL-CDS" id="BAS82157"/>
    </conflict>
    <text>Truncated N-terminus.</text>
</comment>
<comment type="sequence caution" evidence="6">
    <conflict type="erroneous gene model prediction">
        <sequence resource="EMBL-CDS" id="EAZ45418"/>
    </conflict>
</comment>
<name>ESV1_ORYSJ</name>
<proteinExistence type="inferred from homology"/>
<reference key="1">
    <citation type="journal article" date="2005" name="Genome Res.">
        <title>Sequence, annotation, and analysis of synteny between rice chromosome 3 and diverged grass species.</title>
        <authorList>
            <consortium name="The rice chromosome 3 sequencing consortium"/>
            <person name="Buell C.R."/>
            <person name="Yuan Q."/>
            <person name="Ouyang S."/>
            <person name="Liu J."/>
            <person name="Zhu W."/>
            <person name="Wang A."/>
            <person name="Maiti R."/>
            <person name="Haas B."/>
            <person name="Wortman J."/>
            <person name="Pertea M."/>
            <person name="Jones K.M."/>
            <person name="Kim M."/>
            <person name="Overton L."/>
            <person name="Tsitrin T."/>
            <person name="Fadrosh D."/>
            <person name="Bera J."/>
            <person name="Weaver B."/>
            <person name="Jin S."/>
            <person name="Johri S."/>
            <person name="Reardon M."/>
            <person name="Webb K."/>
            <person name="Hill J."/>
            <person name="Moffat K."/>
            <person name="Tallon L."/>
            <person name="Van Aken S."/>
            <person name="Lewis M."/>
            <person name="Utterback T."/>
            <person name="Feldblyum T."/>
            <person name="Zismann V."/>
            <person name="Iobst S."/>
            <person name="Hsiao J."/>
            <person name="de Vazeille A.R."/>
            <person name="Salzberg S.L."/>
            <person name="White O."/>
            <person name="Fraser C.M."/>
            <person name="Yu Y."/>
            <person name="Kim H."/>
            <person name="Rambo T."/>
            <person name="Currie J."/>
            <person name="Collura K."/>
            <person name="Kernodle-Thompson S."/>
            <person name="Wei F."/>
            <person name="Kudrna K."/>
            <person name="Ammiraju J.S.S."/>
            <person name="Luo M."/>
            <person name="Goicoechea J.L."/>
            <person name="Wing R.A."/>
            <person name="Henry D."/>
            <person name="Oates R."/>
            <person name="Palmer M."/>
            <person name="Pries G."/>
            <person name="Saski C."/>
            <person name="Simmons J."/>
            <person name="Soderlund C."/>
            <person name="Nelson W."/>
            <person name="de la Bastide M."/>
            <person name="Spiegel L."/>
            <person name="Nascimento L."/>
            <person name="Huang E."/>
            <person name="Preston R."/>
            <person name="Zutavern T."/>
            <person name="Palmer L."/>
            <person name="O'Shaughnessy A."/>
            <person name="Dike S."/>
            <person name="McCombie W.R."/>
            <person name="Minx P."/>
            <person name="Cordum H."/>
            <person name="Wilson R."/>
            <person name="Jin W."/>
            <person name="Lee H.R."/>
            <person name="Jiang J."/>
            <person name="Jackson S."/>
        </authorList>
    </citation>
    <scope>NUCLEOTIDE SEQUENCE [LARGE SCALE GENOMIC DNA]</scope>
    <source>
        <strain>cv. Nipponbare</strain>
    </source>
</reference>
<reference key="2">
    <citation type="journal article" date="2005" name="Nature">
        <title>The map-based sequence of the rice genome.</title>
        <authorList>
            <consortium name="International rice genome sequencing project (IRGSP)"/>
        </authorList>
    </citation>
    <scope>NUCLEOTIDE SEQUENCE [LARGE SCALE GENOMIC DNA]</scope>
    <source>
        <strain>cv. Nipponbare</strain>
    </source>
</reference>
<reference key="3">
    <citation type="journal article" date="2008" name="Nucleic Acids Res.">
        <title>The rice annotation project database (RAP-DB): 2008 update.</title>
        <authorList>
            <consortium name="The rice annotation project (RAP)"/>
        </authorList>
    </citation>
    <scope>GENOME REANNOTATION</scope>
    <source>
        <strain>cv. Nipponbare</strain>
    </source>
</reference>
<reference key="4">
    <citation type="journal article" date="2013" name="Rice">
        <title>Improvement of the Oryza sativa Nipponbare reference genome using next generation sequence and optical map data.</title>
        <authorList>
            <person name="Kawahara Y."/>
            <person name="de la Bastide M."/>
            <person name="Hamilton J.P."/>
            <person name="Kanamori H."/>
            <person name="McCombie W.R."/>
            <person name="Ouyang S."/>
            <person name="Schwartz D.C."/>
            <person name="Tanaka T."/>
            <person name="Wu J."/>
            <person name="Zhou S."/>
            <person name="Childs K.L."/>
            <person name="Davidson R.M."/>
            <person name="Lin H."/>
            <person name="Quesada-Ocampo L."/>
            <person name="Vaillancourt B."/>
            <person name="Sakai H."/>
            <person name="Lee S.S."/>
            <person name="Kim J."/>
            <person name="Numa H."/>
            <person name="Itoh T."/>
            <person name="Buell C.R."/>
            <person name="Matsumoto T."/>
        </authorList>
    </citation>
    <scope>GENOME REANNOTATION</scope>
    <source>
        <strain>cv. Nipponbare</strain>
    </source>
</reference>
<reference key="5">
    <citation type="journal article" date="2005" name="PLoS Biol.">
        <title>The genomes of Oryza sativa: a history of duplications.</title>
        <authorList>
            <person name="Yu J."/>
            <person name="Wang J."/>
            <person name="Lin W."/>
            <person name="Li S."/>
            <person name="Li H."/>
            <person name="Zhou J."/>
            <person name="Ni P."/>
            <person name="Dong W."/>
            <person name="Hu S."/>
            <person name="Zeng C."/>
            <person name="Zhang J."/>
            <person name="Zhang Y."/>
            <person name="Li R."/>
            <person name="Xu Z."/>
            <person name="Li S."/>
            <person name="Li X."/>
            <person name="Zheng H."/>
            <person name="Cong L."/>
            <person name="Lin L."/>
            <person name="Yin J."/>
            <person name="Geng J."/>
            <person name="Li G."/>
            <person name="Shi J."/>
            <person name="Liu J."/>
            <person name="Lv H."/>
            <person name="Li J."/>
            <person name="Wang J."/>
            <person name="Deng Y."/>
            <person name="Ran L."/>
            <person name="Shi X."/>
            <person name="Wang X."/>
            <person name="Wu Q."/>
            <person name="Li C."/>
            <person name="Ren X."/>
            <person name="Wang J."/>
            <person name="Wang X."/>
            <person name="Li D."/>
            <person name="Liu D."/>
            <person name="Zhang X."/>
            <person name="Ji Z."/>
            <person name="Zhao W."/>
            <person name="Sun Y."/>
            <person name="Zhang Z."/>
            <person name="Bao J."/>
            <person name="Han Y."/>
            <person name="Dong L."/>
            <person name="Ji J."/>
            <person name="Chen P."/>
            <person name="Wu S."/>
            <person name="Liu J."/>
            <person name="Xiao Y."/>
            <person name="Bu D."/>
            <person name="Tan J."/>
            <person name="Yang L."/>
            <person name="Ye C."/>
            <person name="Zhang J."/>
            <person name="Xu J."/>
            <person name="Zhou Y."/>
            <person name="Yu Y."/>
            <person name="Zhang B."/>
            <person name="Zhuang S."/>
            <person name="Wei H."/>
            <person name="Liu B."/>
            <person name="Lei M."/>
            <person name="Yu H."/>
            <person name="Li Y."/>
            <person name="Xu H."/>
            <person name="Wei S."/>
            <person name="He X."/>
            <person name="Fang L."/>
            <person name="Zhang Z."/>
            <person name="Zhang Y."/>
            <person name="Huang X."/>
            <person name="Su Z."/>
            <person name="Tong W."/>
            <person name="Li J."/>
            <person name="Tong Z."/>
            <person name="Li S."/>
            <person name="Ye J."/>
            <person name="Wang L."/>
            <person name="Fang L."/>
            <person name="Lei T."/>
            <person name="Chen C.-S."/>
            <person name="Chen H.-C."/>
            <person name="Xu Z."/>
            <person name="Li H."/>
            <person name="Huang H."/>
            <person name="Zhang F."/>
            <person name="Xu H."/>
            <person name="Li N."/>
            <person name="Zhao C."/>
            <person name="Li S."/>
            <person name="Dong L."/>
            <person name="Huang Y."/>
            <person name="Li L."/>
            <person name="Xi Y."/>
            <person name="Qi Q."/>
            <person name="Li W."/>
            <person name="Zhang B."/>
            <person name="Hu W."/>
            <person name="Zhang Y."/>
            <person name="Tian X."/>
            <person name="Jiao Y."/>
            <person name="Liang X."/>
            <person name="Jin J."/>
            <person name="Gao L."/>
            <person name="Zheng W."/>
            <person name="Hao B."/>
            <person name="Liu S.-M."/>
            <person name="Wang W."/>
            <person name="Yuan L."/>
            <person name="Cao M."/>
            <person name="McDermott J."/>
            <person name="Samudrala R."/>
            <person name="Wang J."/>
            <person name="Wong G.K.-S."/>
            <person name="Yang H."/>
        </authorList>
    </citation>
    <scope>NUCLEOTIDE SEQUENCE [LARGE SCALE GENOMIC DNA]</scope>
    <source>
        <strain>cv. Nipponbare</strain>
    </source>
</reference>
<reference key="6">
    <citation type="journal article" date="2021" name="Front. Plant Sci.">
        <title>EARLY STARVATION 1 is a functionally conserved protein promoting gravitropic responses in plants by forming starch granules.</title>
        <authorList>
            <person name="Song K."/>
            <person name="Lee D.-W."/>
            <person name="Kim J."/>
            <person name="Kim J."/>
            <person name="Guim H."/>
            <person name="Kim K."/>
            <person name="Jeon J.-S."/>
            <person name="Choi G."/>
        </authorList>
    </citation>
    <scope>FUNCTION</scope>
    <scope>DISRUPTION PHENOTYPE</scope>
</reference>
<sequence length="431" mass="49292">MAACSRGLVARPFDLTARGAAHWPCPAPRRRAIRCCCRAQQEPRRRLSKAAAAAPERTEEWRIDGNKPAAAARGRRRASLTAMPSLPFPSPRSRRQWKQQNFYPRCTPRGPAPQSRDTPPKRDTGIASEKEWGINLLDEAVKESGTNEDGSTWYRESGDDRGDNGYRCRWARMGGQSHDGTTEWKETWWEKSDWTGYKELGAEKSGKNGEGDSWWEKWKEVLYQDEWSNLARIERSAEKQAKSGAENAGWYEKWWEKYDAKGWTEKGAHKYGRLNEQSWWERWGEHYDGRGFVLKWTDKWAETDLGTKWGDKWEEKFFAGIGSRQGETWHVSPGGDRWSRTWGEEHFGNGKVHKYGKSTTGESWDLVVDEETYYEAEPHYGWADVVGDSTQLLSIQPVERPPGVYPTIDFSASSPAPPSDDPPGMPPSPLE</sequence>
<organism>
    <name type="scientific">Oryza sativa subsp. japonica</name>
    <name type="common">Rice</name>
    <dbReference type="NCBI Taxonomy" id="39947"/>
    <lineage>
        <taxon>Eukaryota</taxon>
        <taxon>Viridiplantae</taxon>
        <taxon>Streptophyta</taxon>
        <taxon>Embryophyta</taxon>
        <taxon>Tracheophyta</taxon>
        <taxon>Spermatophyta</taxon>
        <taxon>Magnoliopsida</taxon>
        <taxon>Liliopsida</taxon>
        <taxon>Poales</taxon>
        <taxon>Poaceae</taxon>
        <taxon>BOP clade</taxon>
        <taxon>Oryzoideae</taxon>
        <taxon>Oryzeae</taxon>
        <taxon>Oryzinae</taxon>
        <taxon>Oryza</taxon>
        <taxon>Oryza sativa</taxon>
    </lineage>
</organism>